<dbReference type="EC" id="7.-.-.-" evidence="1"/>
<dbReference type="EMBL" id="FM209186">
    <property type="protein sequence ID" value="CAW26249.1"/>
    <property type="molecule type" value="Genomic_DNA"/>
</dbReference>
<dbReference type="RefSeq" id="WP_003107418.1">
    <property type="nucleotide sequence ID" value="NC_011770.1"/>
</dbReference>
<dbReference type="SMR" id="B7UVW8"/>
<dbReference type="KEGG" id="pag:PLES_15211"/>
<dbReference type="HOGENOM" id="CLU_046659_1_0_6"/>
<dbReference type="GO" id="GO:0005886">
    <property type="term" value="C:plasma membrane"/>
    <property type="evidence" value="ECO:0007669"/>
    <property type="project" value="UniProtKB-SubCell"/>
</dbReference>
<dbReference type="GO" id="GO:0022900">
    <property type="term" value="P:electron transport chain"/>
    <property type="evidence" value="ECO:0007669"/>
    <property type="project" value="UniProtKB-UniRule"/>
</dbReference>
<dbReference type="HAMAP" id="MF_00478">
    <property type="entry name" value="RsxE_RnfE"/>
    <property type="match status" value="1"/>
</dbReference>
<dbReference type="InterPro" id="IPR003667">
    <property type="entry name" value="NqrDE/RnfAE"/>
</dbReference>
<dbReference type="InterPro" id="IPR010968">
    <property type="entry name" value="RnfE"/>
</dbReference>
<dbReference type="NCBIfam" id="NF009070">
    <property type="entry name" value="PRK12405.1"/>
    <property type="match status" value="1"/>
</dbReference>
<dbReference type="NCBIfam" id="TIGR01948">
    <property type="entry name" value="rnfE"/>
    <property type="match status" value="1"/>
</dbReference>
<dbReference type="PANTHER" id="PTHR30586">
    <property type="entry name" value="ELECTRON TRANSPORT COMPLEX PROTEIN RNFE"/>
    <property type="match status" value="1"/>
</dbReference>
<dbReference type="PANTHER" id="PTHR30586:SF0">
    <property type="entry name" value="ION-TRANSLOCATING OXIDOREDUCTASE COMPLEX SUBUNIT E"/>
    <property type="match status" value="1"/>
</dbReference>
<dbReference type="Pfam" id="PF02508">
    <property type="entry name" value="Rnf-Nqr"/>
    <property type="match status" value="1"/>
</dbReference>
<dbReference type="PIRSF" id="PIRSF006102">
    <property type="entry name" value="NQR_DE"/>
    <property type="match status" value="1"/>
</dbReference>
<name>RNFE_PSEA8</name>
<organism>
    <name type="scientific">Pseudomonas aeruginosa (strain LESB58)</name>
    <dbReference type="NCBI Taxonomy" id="557722"/>
    <lineage>
        <taxon>Bacteria</taxon>
        <taxon>Pseudomonadati</taxon>
        <taxon>Pseudomonadota</taxon>
        <taxon>Gammaproteobacteria</taxon>
        <taxon>Pseudomonadales</taxon>
        <taxon>Pseudomonadaceae</taxon>
        <taxon>Pseudomonas</taxon>
    </lineage>
</organism>
<keyword id="KW-0997">Cell inner membrane</keyword>
<keyword id="KW-1003">Cell membrane</keyword>
<keyword id="KW-0249">Electron transport</keyword>
<keyword id="KW-0472">Membrane</keyword>
<keyword id="KW-1278">Translocase</keyword>
<keyword id="KW-0812">Transmembrane</keyword>
<keyword id="KW-1133">Transmembrane helix</keyword>
<keyword id="KW-0813">Transport</keyword>
<reference key="1">
    <citation type="journal article" date="2009" name="Genome Res.">
        <title>Newly introduced genomic prophage islands are critical determinants of in vivo competitiveness in the Liverpool epidemic strain of Pseudomonas aeruginosa.</title>
        <authorList>
            <person name="Winstanley C."/>
            <person name="Langille M.G.I."/>
            <person name="Fothergill J.L."/>
            <person name="Kukavica-Ibrulj I."/>
            <person name="Paradis-Bleau C."/>
            <person name="Sanschagrin F."/>
            <person name="Thomson N.R."/>
            <person name="Winsor G.L."/>
            <person name="Quail M.A."/>
            <person name="Lennard N."/>
            <person name="Bignell A."/>
            <person name="Clarke L."/>
            <person name="Seeger K."/>
            <person name="Saunders D."/>
            <person name="Harris D."/>
            <person name="Parkhill J."/>
            <person name="Hancock R.E.W."/>
            <person name="Brinkman F.S.L."/>
            <person name="Levesque R.C."/>
        </authorList>
    </citation>
    <scope>NUCLEOTIDE SEQUENCE [LARGE SCALE GENOMIC DNA]</scope>
    <source>
        <strain>LESB58</strain>
    </source>
</reference>
<feature type="chain" id="PRO_1000125857" description="Ion-translocating oxidoreductase complex subunit E">
    <location>
        <begin position="1"/>
        <end position="238"/>
    </location>
</feature>
<feature type="transmembrane region" description="Helical" evidence="1">
    <location>
        <begin position="41"/>
        <end position="61"/>
    </location>
</feature>
<feature type="transmembrane region" description="Helical" evidence="1">
    <location>
        <begin position="71"/>
        <end position="91"/>
    </location>
</feature>
<feature type="transmembrane region" description="Helical" evidence="1">
    <location>
        <begin position="95"/>
        <end position="115"/>
    </location>
</feature>
<feature type="transmembrane region" description="Helical" evidence="1">
    <location>
        <begin position="130"/>
        <end position="150"/>
    </location>
</feature>
<feature type="transmembrane region" description="Helical" evidence="1">
    <location>
        <begin position="184"/>
        <end position="204"/>
    </location>
</feature>
<evidence type="ECO:0000255" key="1">
    <source>
        <dbReference type="HAMAP-Rule" id="MF_00478"/>
    </source>
</evidence>
<protein>
    <recommendedName>
        <fullName evidence="1">Ion-translocating oxidoreductase complex subunit E</fullName>
        <ecNumber evidence="1">7.-.-.-</ecNumber>
    </recommendedName>
    <alternativeName>
        <fullName evidence="1">Rnf electron transport complex subunit E</fullName>
    </alternativeName>
</protein>
<accession>B7UVW8</accession>
<gene>
    <name evidence="1" type="primary">rnfE</name>
    <name type="ordered locus">PLES_15211</name>
</gene>
<comment type="function">
    <text evidence="1">Part of a membrane-bound complex that couples electron transfer with translocation of ions across the membrane.</text>
</comment>
<comment type="subunit">
    <text evidence="1">The complex is composed of six subunits: RnfA, RnfB, RnfC, RnfD, RnfE and RnfG.</text>
</comment>
<comment type="subcellular location">
    <subcellularLocation>
        <location evidence="1">Cell inner membrane</location>
        <topology evidence="1">Multi-pass membrane protein</topology>
    </subcellularLocation>
</comment>
<comment type="similarity">
    <text evidence="1">Belongs to the NqrDE/RnfAE family.</text>
</comment>
<sequence>MSEQDFREIARNGLWRNNPGLVQLLGLCPLLGTSNSTVNALGLGLATMLVLACSNAAVSLVRGAVSEAIRLPAFVMIIAVLTTCIELLMQAWTYELYQVLGIFIPLITTNCVILGRAEAFAAKNGVLRASFDGLLMGLGFALVLLVLGGLRELLGQGTLLADMHLLFGPAAADWKIQPFPQYQGFLLAILPPGAFIMLGLLIALKNRIDESLAERAKVQAGDVPATQRQRVRVTGVIE</sequence>
<proteinExistence type="inferred from homology"/>